<evidence type="ECO:0000255" key="1">
    <source>
        <dbReference type="HAMAP-Rule" id="MF_00693"/>
    </source>
</evidence>
<gene>
    <name type="ordered locus">Ctha_1786</name>
</gene>
<proteinExistence type="inferred from homology"/>
<sequence>MSGHSKWATIKRKKAATDQKRGKLFTKLVKEITISARMGGGDPDGNPRLRLAIENARANSMPAENIKRAVQRGTGEIDGANYEEISYEGYGPGGIAVIIEAATDNRNRTVAEVRHIMSRSGGSLGESGSVSWMFQRKGSISIAKSLASEEQLMELLLEAGLEDLKTDDEDYFSVLTDVKDLESAKKALEAAKIAYEDAKIDMIPDNTIELDGEDAEKALKMVDALEDNDDVQMVYTNMEISESALEKLNQ</sequence>
<name>Y1786_CHLT3</name>
<dbReference type="EMBL" id="CP001100">
    <property type="protein sequence ID" value="ACF14243.1"/>
    <property type="molecule type" value="Genomic_DNA"/>
</dbReference>
<dbReference type="RefSeq" id="WP_012500327.1">
    <property type="nucleotide sequence ID" value="NC_011026.1"/>
</dbReference>
<dbReference type="SMR" id="B3QTP5"/>
<dbReference type="STRING" id="517418.Ctha_1786"/>
<dbReference type="KEGG" id="cts:Ctha_1786"/>
<dbReference type="eggNOG" id="COG0217">
    <property type="taxonomic scope" value="Bacteria"/>
</dbReference>
<dbReference type="HOGENOM" id="CLU_062974_2_2_10"/>
<dbReference type="OrthoDB" id="9781053at2"/>
<dbReference type="Proteomes" id="UP000001208">
    <property type="component" value="Chromosome"/>
</dbReference>
<dbReference type="GO" id="GO:0005829">
    <property type="term" value="C:cytosol"/>
    <property type="evidence" value="ECO:0007669"/>
    <property type="project" value="TreeGrafter"/>
</dbReference>
<dbReference type="GO" id="GO:0003677">
    <property type="term" value="F:DNA binding"/>
    <property type="evidence" value="ECO:0007669"/>
    <property type="project" value="UniProtKB-UniRule"/>
</dbReference>
<dbReference type="GO" id="GO:0006355">
    <property type="term" value="P:regulation of DNA-templated transcription"/>
    <property type="evidence" value="ECO:0007669"/>
    <property type="project" value="UniProtKB-UniRule"/>
</dbReference>
<dbReference type="FunFam" id="1.10.10.200:FF:000002">
    <property type="entry name" value="Probable transcriptional regulatory protein CLM62_37755"/>
    <property type="match status" value="1"/>
</dbReference>
<dbReference type="Gene3D" id="1.10.10.200">
    <property type="match status" value="1"/>
</dbReference>
<dbReference type="Gene3D" id="3.30.70.980">
    <property type="match status" value="2"/>
</dbReference>
<dbReference type="HAMAP" id="MF_00693">
    <property type="entry name" value="Transcrip_reg_TACO1"/>
    <property type="match status" value="1"/>
</dbReference>
<dbReference type="InterPro" id="IPR017856">
    <property type="entry name" value="Integrase-like_N"/>
</dbReference>
<dbReference type="InterPro" id="IPR048300">
    <property type="entry name" value="TACO1_YebC-like_2nd/3rd_dom"/>
</dbReference>
<dbReference type="InterPro" id="IPR049083">
    <property type="entry name" value="TACO1_YebC_N"/>
</dbReference>
<dbReference type="InterPro" id="IPR002876">
    <property type="entry name" value="Transcrip_reg_TACO1-like"/>
</dbReference>
<dbReference type="InterPro" id="IPR026564">
    <property type="entry name" value="Transcrip_reg_TACO1-like_dom3"/>
</dbReference>
<dbReference type="InterPro" id="IPR029072">
    <property type="entry name" value="YebC-like"/>
</dbReference>
<dbReference type="NCBIfam" id="NF001030">
    <property type="entry name" value="PRK00110.1"/>
    <property type="match status" value="1"/>
</dbReference>
<dbReference type="NCBIfam" id="NF009044">
    <property type="entry name" value="PRK12378.1"/>
    <property type="match status" value="1"/>
</dbReference>
<dbReference type="NCBIfam" id="TIGR01033">
    <property type="entry name" value="YebC/PmpR family DNA-binding transcriptional regulator"/>
    <property type="match status" value="1"/>
</dbReference>
<dbReference type="PANTHER" id="PTHR12532:SF6">
    <property type="entry name" value="TRANSCRIPTIONAL REGULATORY PROTEIN YEBC-RELATED"/>
    <property type="match status" value="1"/>
</dbReference>
<dbReference type="PANTHER" id="PTHR12532">
    <property type="entry name" value="TRANSLATIONAL ACTIVATOR OF CYTOCHROME C OXIDASE 1"/>
    <property type="match status" value="1"/>
</dbReference>
<dbReference type="Pfam" id="PF20772">
    <property type="entry name" value="TACO1_YebC_N"/>
    <property type="match status" value="1"/>
</dbReference>
<dbReference type="Pfam" id="PF01709">
    <property type="entry name" value="Transcrip_reg"/>
    <property type="match status" value="1"/>
</dbReference>
<dbReference type="SUPFAM" id="SSF75625">
    <property type="entry name" value="YebC-like"/>
    <property type="match status" value="1"/>
</dbReference>
<feature type="chain" id="PRO_1000132172" description="Probable transcriptional regulatory protein Ctha_1786">
    <location>
        <begin position="1"/>
        <end position="250"/>
    </location>
</feature>
<accession>B3QTP5</accession>
<organism>
    <name type="scientific">Chloroherpeton thalassium (strain ATCC 35110 / GB-78)</name>
    <dbReference type="NCBI Taxonomy" id="517418"/>
    <lineage>
        <taxon>Bacteria</taxon>
        <taxon>Pseudomonadati</taxon>
        <taxon>Chlorobiota</taxon>
        <taxon>Chlorobiia</taxon>
        <taxon>Chlorobiales</taxon>
        <taxon>Chloroherpetonaceae</taxon>
        <taxon>Chloroherpeton</taxon>
    </lineage>
</organism>
<reference key="1">
    <citation type="submission" date="2008-06" db="EMBL/GenBank/DDBJ databases">
        <title>Complete sequence of Chloroherpeton thalassium ATCC 35110.</title>
        <authorList>
            <consortium name="US DOE Joint Genome Institute"/>
            <person name="Lucas S."/>
            <person name="Copeland A."/>
            <person name="Lapidus A."/>
            <person name="Glavina del Rio T."/>
            <person name="Dalin E."/>
            <person name="Tice H."/>
            <person name="Bruce D."/>
            <person name="Goodwin L."/>
            <person name="Pitluck S."/>
            <person name="Schmutz J."/>
            <person name="Larimer F."/>
            <person name="Land M."/>
            <person name="Hauser L."/>
            <person name="Kyrpides N."/>
            <person name="Mikhailova N."/>
            <person name="Liu Z."/>
            <person name="Li T."/>
            <person name="Zhao F."/>
            <person name="Overmann J."/>
            <person name="Bryant D.A."/>
            <person name="Richardson P."/>
        </authorList>
    </citation>
    <scope>NUCLEOTIDE SEQUENCE [LARGE SCALE GENOMIC DNA]</scope>
    <source>
        <strain>ATCC 35110 / GB-78</strain>
    </source>
</reference>
<keyword id="KW-0963">Cytoplasm</keyword>
<keyword id="KW-0238">DNA-binding</keyword>
<keyword id="KW-1185">Reference proteome</keyword>
<keyword id="KW-0804">Transcription</keyword>
<keyword id="KW-0805">Transcription regulation</keyword>
<comment type="subcellular location">
    <subcellularLocation>
        <location evidence="1">Cytoplasm</location>
    </subcellularLocation>
</comment>
<comment type="similarity">
    <text evidence="1">Belongs to the TACO1 family.</text>
</comment>
<protein>
    <recommendedName>
        <fullName evidence="1">Probable transcriptional regulatory protein Ctha_1786</fullName>
    </recommendedName>
</protein>